<gene>
    <name evidence="1" type="primary">rbfA</name>
    <name type="ordered locus">SP70585_0617</name>
</gene>
<evidence type="ECO:0000255" key="1">
    <source>
        <dbReference type="HAMAP-Rule" id="MF_00003"/>
    </source>
</evidence>
<feature type="chain" id="PRO_1000116216" description="Ribosome-binding factor A">
    <location>
        <begin position="1"/>
        <end position="116"/>
    </location>
</feature>
<comment type="function">
    <text evidence="1">One of several proteins that assist in the late maturation steps of the functional core of the 30S ribosomal subunit. Associates with free 30S ribosomal subunits (but not with 30S subunits that are part of 70S ribosomes or polysomes). Required for efficient processing of 16S rRNA. May interact with the 5'-terminal helix region of 16S rRNA.</text>
</comment>
<comment type="subunit">
    <text evidence="1">Monomer. Binds 30S ribosomal subunits, but not 50S ribosomal subunits or 70S ribosomes.</text>
</comment>
<comment type="subcellular location">
    <subcellularLocation>
        <location evidence="1">Cytoplasm</location>
    </subcellularLocation>
</comment>
<comment type="similarity">
    <text evidence="1">Belongs to the RbfA family.</text>
</comment>
<organism>
    <name type="scientific">Streptococcus pneumoniae (strain 70585)</name>
    <dbReference type="NCBI Taxonomy" id="488221"/>
    <lineage>
        <taxon>Bacteria</taxon>
        <taxon>Bacillati</taxon>
        <taxon>Bacillota</taxon>
        <taxon>Bacilli</taxon>
        <taxon>Lactobacillales</taxon>
        <taxon>Streptococcaceae</taxon>
        <taxon>Streptococcus</taxon>
    </lineage>
</organism>
<reference key="1">
    <citation type="journal article" date="2010" name="Genome Biol.">
        <title>Structure and dynamics of the pan-genome of Streptococcus pneumoniae and closely related species.</title>
        <authorList>
            <person name="Donati C."/>
            <person name="Hiller N.L."/>
            <person name="Tettelin H."/>
            <person name="Muzzi A."/>
            <person name="Croucher N.J."/>
            <person name="Angiuoli S.V."/>
            <person name="Oggioni M."/>
            <person name="Dunning Hotopp J.C."/>
            <person name="Hu F.Z."/>
            <person name="Riley D.R."/>
            <person name="Covacci A."/>
            <person name="Mitchell T.J."/>
            <person name="Bentley S.D."/>
            <person name="Kilian M."/>
            <person name="Ehrlich G.D."/>
            <person name="Rappuoli R."/>
            <person name="Moxon E.R."/>
            <person name="Masignani V."/>
        </authorList>
    </citation>
    <scope>NUCLEOTIDE SEQUENCE [LARGE SCALE GENOMIC DNA]</scope>
    <source>
        <strain>70585</strain>
    </source>
</reference>
<sequence length="116" mass="13310">MANHFRTDRVGMEIKREVNEILQKKVRDPRVQGVTITDVQMLGDLSVAKVYYTILSNLASDNQKAQIGLEKATGTIKRELGRNLKLYKIPDLTFVKDESIEYGNKIDEMLRNLDKN</sequence>
<name>RBFA_STRP7</name>
<protein>
    <recommendedName>
        <fullName evidence="1">Ribosome-binding factor A</fullName>
    </recommendedName>
</protein>
<accession>C1C5S9</accession>
<proteinExistence type="inferred from homology"/>
<keyword id="KW-0963">Cytoplasm</keyword>
<keyword id="KW-0690">Ribosome biogenesis</keyword>
<dbReference type="EMBL" id="CP000918">
    <property type="protein sequence ID" value="ACO15944.1"/>
    <property type="molecule type" value="Genomic_DNA"/>
</dbReference>
<dbReference type="RefSeq" id="WP_001273601.1">
    <property type="nucleotide sequence ID" value="NC_012468.1"/>
</dbReference>
<dbReference type="SMR" id="C1C5S9"/>
<dbReference type="GeneID" id="93738448"/>
<dbReference type="KEGG" id="snm:SP70585_0617"/>
<dbReference type="HOGENOM" id="CLU_089475_3_0_9"/>
<dbReference type="Proteomes" id="UP000002211">
    <property type="component" value="Chromosome"/>
</dbReference>
<dbReference type="GO" id="GO:0005829">
    <property type="term" value="C:cytosol"/>
    <property type="evidence" value="ECO:0007669"/>
    <property type="project" value="TreeGrafter"/>
</dbReference>
<dbReference type="GO" id="GO:0043024">
    <property type="term" value="F:ribosomal small subunit binding"/>
    <property type="evidence" value="ECO:0007669"/>
    <property type="project" value="TreeGrafter"/>
</dbReference>
<dbReference type="GO" id="GO:0030490">
    <property type="term" value="P:maturation of SSU-rRNA"/>
    <property type="evidence" value="ECO:0007669"/>
    <property type="project" value="UniProtKB-UniRule"/>
</dbReference>
<dbReference type="FunFam" id="3.30.300.20:FF:000012">
    <property type="entry name" value="Ribosome-binding factor A"/>
    <property type="match status" value="1"/>
</dbReference>
<dbReference type="Gene3D" id="3.30.300.20">
    <property type="match status" value="1"/>
</dbReference>
<dbReference type="HAMAP" id="MF_00003">
    <property type="entry name" value="RbfA"/>
    <property type="match status" value="1"/>
</dbReference>
<dbReference type="InterPro" id="IPR015946">
    <property type="entry name" value="KH_dom-like_a/b"/>
</dbReference>
<dbReference type="InterPro" id="IPR000238">
    <property type="entry name" value="RbfA"/>
</dbReference>
<dbReference type="InterPro" id="IPR023799">
    <property type="entry name" value="RbfA_dom_sf"/>
</dbReference>
<dbReference type="InterPro" id="IPR020053">
    <property type="entry name" value="Ribosome-bd_factorA_CS"/>
</dbReference>
<dbReference type="NCBIfam" id="TIGR00082">
    <property type="entry name" value="rbfA"/>
    <property type="match status" value="1"/>
</dbReference>
<dbReference type="PANTHER" id="PTHR33515">
    <property type="entry name" value="RIBOSOME-BINDING FACTOR A, CHLOROPLASTIC-RELATED"/>
    <property type="match status" value="1"/>
</dbReference>
<dbReference type="PANTHER" id="PTHR33515:SF1">
    <property type="entry name" value="RIBOSOME-BINDING FACTOR A, CHLOROPLASTIC-RELATED"/>
    <property type="match status" value="1"/>
</dbReference>
<dbReference type="Pfam" id="PF02033">
    <property type="entry name" value="RBFA"/>
    <property type="match status" value="1"/>
</dbReference>
<dbReference type="SUPFAM" id="SSF89919">
    <property type="entry name" value="Ribosome-binding factor A, RbfA"/>
    <property type="match status" value="1"/>
</dbReference>
<dbReference type="PROSITE" id="PS01319">
    <property type="entry name" value="RBFA"/>
    <property type="match status" value="1"/>
</dbReference>